<proteinExistence type="evidence at transcript level"/>
<feature type="signal peptide" evidence="3">
    <location>
        <begin position="1"/>
        <end position="20"/>
    </location>
</feature>
<feature type="chain" id="PRO_0000249727" description="Endomucin">
    <location>
        <begin position="21"/>
        <end position="250"/>
    </location>
</feature>
<feature type="transmembrane region" description="Helical" evidence="3">
    <location>
        <begin position="180"/>
        <end position="200"/>
    </location>
</feature>
<feature type="region of interest" description="Disordered" evidence="4">
    <location>
        <begin position="24"/>
        <end position="83"/>
    </location>
</feature>
<feature type="region of interest" description="Disordered" evidence="4">
    <location>
        <begin position="105"/>
        <end position="153"/>
    </location>
</feature>
<feature type="region of interest" description="Disordered" evidence="4">
    <location>
        <begin position="210"/>
        <end position="250"/>
    </location>
</feature>
<feature type="compositionally biased region" description="Low complexity" evidence="4">
    <location>
        <begin position="24"/>
        <end position="38"/>
    </location>
</feature>
<feature type="compositionally biased region" description="Low complexity" evidence="4">
    <location>
        <begin position="45"/>
        <end position="60"/>
    </location>
</feature>
<feature type="compositionally biased region" description="Polar residues" evidence="4">
    <location>
        <begin position="105"/>
        <end position="135"/>
    </location>
</feature>
<feature type="compositionally biased region" description="Polar residues" evidence="4">
    <location>
        <begin position="143"/>
        <end position="153"/>
    </location>
</feature>
<feature type="modified residue" description="Phosphoserine" evidence="2">
    <location>
        <position position="226"/>
    </location>
</feature>
<feature type="glycosylation site" description="N-linked (GlcNAc...) asparagine" evidence="3">
    <location>
        <position position="46"/>
    </location>
</feature>
<feature type="glycosylation site" description="N-linked (GlcNAc...) asparagine" evidence="3">
    <location>
        <position position="115"/>
    </location>
</feature>
<feature type="glycosylation site" description="N-linked (GlcNAc...) asparagine" evidence="3">
    <location>
        <position position="119"/>
    </location>
</feature>
<keyword id="KW-0325">Glycoprotein</keyword>
<keyword id="KW-0472">Membrane</keyword>
<keyword id="KW-0597">Phosphoprotein</keyword>
<keyword id="KW-1185">Reference proteome</keyword>
<keyword id="KW-0732">Signal</keyword>
<keyword id="KW-0812">Transmembrane</keyword>
<keyword id="KW-1133">Transmembrane helix</keyword>
<gene>
    <name type="primary">Emcn</name>
</gene>
<accession>Q6AY82</accession>
<sequence>MRLLQVTALFFLLSNSLCRGENSKALTETSTTKASATTPDMVSITNKSTGGTPPKGTTNSATPKTPLMPALDSPTTPKHETTTRGVIKNEVSTIKTTVANPTISNAVSTLSSPQNKTENQSSIRTTEISGTNQLPDDQKPKTTETPSASLTTAKTISQIQDTEDGKITATTSTTPSYSSVILPVVIALIVITVLVFTLVGLYRICWKRDPGTPESGNDQPQSDKESVKLLTVKTISHESGEHSAQGKAKN</sequence>
<reference key="1">
    <citation type="journal article" date="2004" name="Genome Res.">
        <title>The status, quality, and expansion of the NIH full-length cDNA project: the Mammalian Gene Collection (MGC).</title>
        <authorList>
            <consortium name="The MGC Project Team"/>
        </authorList>
    </citation>
    <scope>NUCLEOTIDE SEQUENCE [LARGE SCALE MRNA]</scope>
    <source>
        <tissue>Kidney</tissue>
    </source>
</reference>
<organism>
    <name type="scientific">Rattus norvegicus</name>
    <name type="common">Rat</name>
    <dbReference type="NCBI Taxonomy" id="10116"/>
    <lineage>
        <taxon>Eukaryota</taxon>
        <taxon>Metazoa</taxon>
        <taxon>Chordata</taxon>
        <taxon>Craniata</taxon>
        <taxon>Vertebrata</taxon>
        <taxon>Euteleostomi</taxon>
        <taxon>Mammalia</taxon>
        <taxon>Eutheria</taxon>
        <taxon>Euarchontoglires</taxon>
        <taxon>Glires</taxon>
        <taxon>Rodentia</taxon>
        <taxon>Myomorpha</taxon>
        <taxon>Muroidea</taxon>
        <taxon>Muridae</taxon>
        <taxon>Murinae</taxon>
        <taxon>Rattus</taxon>
    </lineage>
</organism>
<evidence type="ECO:0000250" key="1"/>
<evidence type="ECO:0000250" key="2">
    <source>
        <dbReference type="UniProtKB" id="Q9R0H2"/>
    </source>
</evidence>
<evidence type="ECO:0000255" key="3"/>
<evidence type="ECO:0000256" key="4">
    <source>
        <dbReference type="SAM" id="MobiDB-lite"/>
    </source>
</evidence>
<evidence type="ECO:0000305" key="5"/>
<comment type="function">
    <text evidence="1">Endothelial sialomucin, also called endomucin or mucin-like sialoglycoprotein, which interferes with the assembly of focal adhesion complexes and inhibits interaction between cells and the extracellular matrix.</text>
</comment>
<comment type="subcellular location">
    <subcellularLocation>
        <location evidence="5">Membrane</location>
        <topology evidence="5">Single-pass membrane protein</topology>
    </subcellularLocation>
</comment>
<comment type="PTM">
    <text evidence="1">Highly O-glycosylated. Sialic acid-rich glycoprotein (By similarity).</text>
</comment>
<protein>
    <recommendedName>
        <fullName>Endomucin</fullName>
    </recommendedName>
</protein>
<dbReference type="EMBL" id="BC079155">
    <property type="protein sequence ID" value="AAH79155.1"/>
    <property type="molecule type" value="mRNA"/>
</dbReference>
<dbReference type="RefSeq" id="NP_001004228.1">
    <property type="nucleotide sequence ID" value="NM_001004228.1"/>
</dbReference>
<dbReference type="SMR" id="Q6AY82"/>
<dbReference type="FunCoup" id="Q6AY82">
    <property type="interactions" value="53"/>
</dbReference>
<dbReference type="STRING" id="10116.ENSRNOP00000033031"/>
<dbReference type="GlyCosmos" id="Q6AY82">
    <property type="glycosylation" value="3 sites, No reported glycans"/>
</dbReference>
<dbReference type="GlyGen" id="Q6AY82">
    <property type="glycosylation" value="4 sites"/>
</dbReference>
<dbReference type="PhosphoSitePlus" id="Q6AY82"/>
<dbReference type="SwissPalm" id="Q6AY82"/>
<dbReference type="PaxDb" id="10116-ENSRNOP00000033031"/>
<dbReference type="Ensembl" id="ENSRNOT00000035700.4">
    <property type="protein sequence ID" value="ENSRNOP00000033031.3"/>
    <property type="gene ID" value="ENSRNOG00000022910.4"/>
</dbReference>
<dbReference type="GeneID" id="295490"/>
<dbReference type="KEGG" id="rno:295490"/>
<dbReference type="AGR" id="RGD:1303218"/>
<dbReference type="CTD" id="51705"/>
<dbReference type="RGD" id="1303218">
    <property type="gene designation" value="Emcn"/>
</dbReference>
<dbReference type="eggNOG" id="ENOG502S6VA">
    <property type="taxonomic scope" value="Eukaryota"/>
</dbReference>
<dbReference type="GeneTree" id="ENSGT00390000012139"/>
<dbReference type="HOGENOM" id="CLU_092835_0_0_1"/>
<dbReference type="InParanoid" id="Q6AY82"/>
<dbReference type="OrthoDB" id="90384at9989"/>
<dbReference type="PhylomeDB" id="Q6AY82"/>
<dbReference type="TreeFam" id="TF337783"/>
<dbReference type="PRO" id="PR:Q6AY82"/>
<dbReference type="Proteomes" id="UP000002494">
    <property type="component" value="Chromosome 2"/>
</dbReference>
<dbReference type="Bgee" id="ENSRNOG00000022910">
    <property type="expression patterns" value="Expressed in lung and 20 other cell types or tissues"/>
</dbReference>
<dbReference type="GO" id="GO:0005886">
    <property type="term" value="C:plasma membrane"/>
    <property type="evidence" value="ECO:0000250"/>
    <property type="project" value="HGNC-UCL"/>
</dbReference>
<dbReference type="GO" id="GO:0030246">
    <property type="term" value="F:carbohydrate binding"/>
    <property type="evidence" value="ECO:0000250"/>
    <property type="project" value="HGNC-UCL"/>
</dbReference>
<dbReference type="GO" id="GO:0001525">
    <property type="term" value="P:angiogenesis"/>
    <property type="evidence" value="ECO:0000250"/>
    <property type="project" value="HGNC-UCL"/>
</dbReference>
<dbReference type="GO" id="GO:0098609">
    <property type="term" value="P:cell-cell adhesion"/>
    <property type="evidence" value="ECO:0000250"/>
    <property type="project" value="HGNC-UCL"/>
</dbReference>
<dbReference type="GO" id="GO:0061484">
    <property type="term" value="P:hematopoietic stem cell homeostasis"/>
    <property type="evidence" value="ECO:0000266"/>
    <property type="project" value="RGD"/>
</dbReference>
<dbReference type="GO" id="GO:0030155">
    <property type="term" value="P:regulation of cell adhesion"/>
    <property type="evidence" value="ECO:0000250"/>
    <property type="project" value="HGNC-UCL"/>
</dbReference>
<dbReference type="InterPro" id="IPR010740">
    <property type="entry name" value="Endomucin"/>
</dbReference>
<dbReference type="PANTHER" id="PTHR15869:SF0">
    <property type="entry name" value="ENDOMUCIN"/>
    <property type="match status" value="1"/>
</dbReference>
<dbReference type="PANTHER" id="PTHR15869">
    <property type="entry name" value="ENDOMUCIN-RELATED"/>
    <property type="match status" value="1"/>
</dbReference>
<dbReference type="Pfam" id="PF07010">
    <property type="entry name" value="Endomucin"/>
    <property type="match status" value="1"/>
</dbReference>
<name>MUCEN_RAT</name>